<comment type="function">
    <text evidence="1">May act in meiotic drive.</text>
</comment>
<comment type="subcellular location">
    <subcellularLocation>
        <location evidence="2 3">Spore membrane</location>
        <topology evidence="3">Multi-pass membrane protein</topology>
    </subcellularLocation>
</comment>
<comment type="disruption phenotype">
    <text evidence="5">Normal vegetative cell population growth (PubMed:32032353). Simultaneous knockout of wtf15, wtf14 and wtf11 results in normal spore viability (PubMed:32032353).</text>
</comment>
<comment type="miscellaneous">
    <text evidence="7">Although the gene is capable of encoding two isoforms, RNA sequencing data show no evidence of alternative transcripts.</text>
</comment>
<comment type="similarity">
    <text evidence="6">Belongs to the WTF family.</text>
</comment>
<comment type="sequence caution" evidence="6">
    <conflict type="erroneous gene model prediction">
        <sequence resource="EMBL-CDS" id="CAA19269"/>
    </conflict>
</comment>
<feature type="chain" id="PRO_0000193223" description="Wtf element wtf7">
    <location>
        <begin position="1"/>
        <end position="215"/>
    </location>
</feature>
<feature type="transmembrane region" description="Helical" evidence="3">
    <location>
        <begin position="119"/>
        <end position="139"/>
    </location>
</feature>
<feature type="transmembrane region" description="Helical" evidence="3">
    <location>
        <begin position="149"/>
        <end position="169"/>
    </location>
</feature>
<feature type="transmembrane region" description="Helical" evidence="3">
    <location>
        <begin position="189"/>
        <end position="209"/>
    </location>
</feature>
<feature type="region of interest" description="Disordered" evidence="4">
    <location>
        <begin position="1"/>
        <end position="21"/>
    </location>
</feature>
<dbReference type="EMBL" id="CU329672">
    <property type="protein sequence ID" value="CAA19269.3"/>
    <property type="status" value="ALT_SEQ"/>
    <property type="molecule type" value="Genomic_DNA"/>
</dbReference>
<dbReference type="PIR" id="T41562">
    <property type="entry name" value="T41562"/>
</dbReference>
<dbReference type="PaxDb" id="4896-SPCC736.05.1"/>
<dbReference type="EnsemblFungi" id="SPCC736.05.1">
    <property type="protein sequence ID" value="SPCC736.05.1:pep"/>
    <property type="gene ID" value="SPCC736.05"/>
</dbReference>
<dbReference type="PomBase" id="SPCC736.05">
    <property type="gene designation" value="wtf7"/>
</dbReference>
<dbReference type="VEuPathDB" id="FungiDB:SPCC736.05"/>
<dbReference type="HOGENOM" id="CLU_1267539_0_0_1"/>
<dbReference type="InParanoid" id="Q7Z9I5"/>
<dbReference type="PRO" id="PR:Q7Z9I5"/>
<dbReference type="Proteomes" id="UP000002485">
    <property type="component" value="Chromosome III"/>
</dbReference>
<dbReference type="GO" id="GO:0005737">
    <property type="term" value="C:cytoplasm"/>
    <property type="evidence" value="ECO:0000314"/>
    <property type="project" value="PomBase"/>
</dbReference>
<dbReference type="GO" id="GO:0016020">
    <property type="term" value="C:membrane"/>
    <property type="evidence" value="ECO:0007669"/>
    <property type="project" value="UniProtKB-KW"/>
</dbReference>
<dbReference type="GO" id="GO:0110134">
    <property type="term" value="P:meiotic drive"/>
    <property type="evidence" value="ECO:0000255"/>
    <property type="project" value="PomBase"/>
</dbReference>
<dbReference type="InterPro" id="IPR004982">
    <property type="entry name" value="WTF"/>
</dbReference>
<dbReference type="Pfam" id="PF03303">
    <property type="entry name" value="WTF"/>
    <property type="match status" value="1"/>
</dbReference>
<name>WTF7_SCHPO</name>
<reference key="1">
    <citation type="journal article" date="2002" name="Nature">
        <title>The genome sequence of Schizosaccharomyces pombe.</title>
        <authorList>
            <person name="Wood V."/>
            <person name="Gwilliam R."/>
            <person name="Rajandream M.A."/>
            <person name="Lyne M.H."/>
            <person name="Lyne R."/>
            <person name="Stewart A."/>
            <person name="Sgouros J.G."/>
            <person name="Peat N."/>
            <person name="Hayles J."/>
            <person name="Baker S.G."/>
            <person name="Basham D."/>
            <person name="Bowman S."/>
            <person name="Brooks K."/>
            <person name="Brown D."/>
            <person name="Brown S."/>
            <person name="Chillingworth T."/>
            <person name="Churcher C.M."/>
            <person name="Collins M."/>
            <person name="Connor R."/>
            <person name="Cronin A."/>
            <person name="Davis P."/>
            <person name="Feltwell T."/>
            <person name="Fraser A."/>
            <person name="Gentles S."/>
            <person name="Goble A."/>
            <person name="Hamlin N."/>
            <person name="Harris D.E."/>
            <person name="Hidalgo J."/>
            <person name="Hodgson G."/>
            <person name="Holroyd S."/>
            <person name="Hornsby T."/>
            <person name="Howarth S."/>
            <person name="Huckle E.J."/>
            <person name="Hunt S."/>
            <person name="Jagels K."/>
            <person name="James K.D."/>
            <person name="Jones L."/>
            <person name="Jones M."/>
            <person name="Leather S."/>
            <person name="McDonald S."/>
            <person name="McLean J."/>
            <person name="Mooney P."/>
            <person name="Moule S."/>
            <person name="Mungall K.L."/>
            <person name="Murphy L.D."/>
            <person name="Niblett D."/>
            <person name="Odell C."/>
            <person name="Oliver K."/>
            <person name="O'Neil S."/>
            <person name="Pearson D."/>
            <person name="Quail M.A."/>
            <person name="Rabbinowitsch E."/>
            <person name="Rutherford K.M."/>
            <person name="Rutter S."/>
            <person name="Saunders D."/>
            <person name="Seeger K."/>
            <person name="Sharp S."/>
            <person name="Skelton J."/>
            <person name="Simmonds M.N."/>
            <person name="Squares R."/>
            <person name="Squares S."/>
            <person name="Stevens K."/>
            <person name="Taylor K."/>
            <person name="Taylor R.G."/>
            <person name="Tivey A."/>
            <person name="Walsh S.V."/>
            <person name="Warren T."/>
            <person name="Whitehead S."/>
            <person name="Woodward J.R."/>
            <person name="Volckaert G."/>
            <person name="Aert R."/>
            <person name="Robben J."/>
            <person name="Grymonprez B."/>
            <person name="Weltjens I."/>
            <person name="Vanstreels E."/>
            <person name="Rieger M."/>
            <person name="Schaefer M."/>
            <person name="Mueller-Auer S."/>
            <person name="Gabel C."/>
            <person name="Fuchs M."/>
            <person name="Duesterhoeft A."/>
            <person name="Fritzc C."/>
            <person name="Holzer E."/>
            <person name="Moestl D."/>
            <person name="Hilbert H."/>
            <person name="Borzym K."/>
            <person name="Langer I."/>
            <person name="Beck A."/>
            <person name="Lehrach H."/>
            <person name="Reinhardt R."/>
            <person name="Pohl T.M."/>
            <person name="Eger P."/>
            <person name="Zimmermann W."/>
            <person name="Wedler H."/>
            <person name="Wambutt R."/>
            <person name="Purnelle B."/>
            <person name="Goffeau A."/>
            <person name="Cadieu E."/>
            <person name="Dreano S."/>
            <person name="Gloux S."/>
            <person name="Lelaure V."/>
            <person name="Mottier S."/>
            <person name="Galibert F."/>
            <person name="Aves S.J."/>
            <person name="Xiang Z."/>
            <person name="Hunt C."/>
            <person name="Moore K."/>
            <person name="Hurst S.M."/>
            <person name="Lucas M."/>
            <person name="Rochet M."/>
            <person name="Gaillardin C."/>
            <person name="Tallada V.A."/>
            <person name="Garzon A."/>
            <person name="Thode G."/>
            <person name="Daga R.R."/>
            <person name="Cruzado L."/>
            <person name="Jimenez J."/>
            <person name="Sanchez M."/>
            <person name="del Rey F."/>
            <person name="Benito J."/>
            <person name="Dominguez A."/>
            <person name="Revuelta J.L."/>
            <person name="Moreno S."/>
            <person name="Armstrong J."/>
            <person name="Forsburg S.L."/>
            <person name="Cerutti L."/>
            <person name="Lowe T."/>
            <person name="McCombie W.R."/>
            <person name="Paulsen I."/>
            <person name="Potashkin J."/>
            <person name="Shpakovski G.V."/>
            <person name="Ussery D."/>
            <person name="Barrell B.G."/>
            <person name="Nurse P."/>
        </authorList>
    </citation>
    <scope>NUCLEOTIDE SEQUENCE [LARGE SCALE GENOMIC DNA]</scope>
    <source>
        <strain>972 / ATCC 24843</strain>
    </source>
</reference>
<reference key="2">
    <citation type="journal article" date="2011" name="Science">
        <title>Comparative functional genomics of the fission yeasts.</title>
        <authorList>
            <person name="Rhind N."/>
            <person name="Chen Z."/>
            <person name="Yassour M."/>
            <person name="Thompson D.A."/>
            <person name="Haas B.J."/>
            <person name="Habib N."/>
            <person name="Wapinski I."/>
            <person name="Roy S."/>
            <person name="Lin M.F."/>
            <person name="Heiman D.I."/>
            <person name="Young S.K."/>
            <person name="Furuya K."/>
            <person name="Guo Y."/>
            <person name="Pidoux A."/>
            <person name="Chen H.M."/>
            <person name="Robbertse B."/>
            <person name="Goldberg J.M."/>
            <person name="Aoki K."/>
            <person name="Bayne E.H."/>
            <person name="Berlin A.M."/>
            <person name="Desjardins C.A."/>
            <person name="Dobbs E."/>
            <person name="Dukaj L."/>
            <person name="Fan L."/>
            <person name="FitzGerald M.G."/>
            <person name="French C."/>
            <person name="Gujja S."/>
            <person name="Hansen K."/>
            <person name="Keifenheim D."/>
            <person name="Levin J.Z."/>
            <person name="Mosher R.A."/>
            <person name="Mueller C.A."/>
            <person name="Pfiffner J."/>
            <person name="Priest M."/>
            <person name="Russ C."/>
            <person name="Smialowska A."/>
            <person name="Swoboda P."/>
            <person name="Sykes S.M."/>
            <person name="Vaughn M."/>
            <person name="Vengrova S."/>
            <person name="Yoder R."/>
            <person name="Zeng Q."/>
            <person name="Allshire R."/>
            <person name="Baulcombe D."/>
            <person name="Birren B.W."/>
            <person name="Brown W."/>
            <person name="Ekwall K."/>
            <person name="Kellis M."/>
            <person name="Leatherwood J."/>
            <person name="Levin H."/>
            <person name="Margalit H."/>
            <person name="Martienssen R."/>
            <person name="Nieduszynski C.A."/>
            <person name="Spatafora J.W."/>
            <person name="Friedman N."/>
            <person name="Dalgaard J.Z."/>
            <person name="Baumann P."/>
            <person name="Niki H."/>
            <person name="Regev A."/>
            <person name="Nusbaum C."/>
        </authorList>
    </citation>
    <scope>REVISION OF GENE MODEL</scope>
</reference>
<reference key="3">
    <citation type="journal article" date="2019" name="Mol. Biol. Evol.">
        <title>Killer meiotic drive and dynamic evolution of the wtf gene family.</title>
        <authorList>
            <person name="Eickbush M.T."/>
            <person name="Young J.M."/>
            <person name="Zanders S.E."/>
        </authorList>
    </citation>
    <scope>REVISION OF GENE MODEL</scope>
    <scope>LACK OF ALTERNATIVE SPLICING</scope>
</reference>
<reference key="4">
    <citation type="journal article" date="2003" name="Genome Res.">
        <title>Retrotransposons and their recognition of pol II promoters: a comprehensive survey of the transposable elements from the complete genome sequence of Schizosaccharomyces pombe.</title>
        <authorList>
            <person name="Bowen N.J."/>
            <person name="Jordan I.K."/>
            <person name="Epstein J.A."/>
            <person name="Wood V."/>
            <person name="Levin H.L."/>
        </authorList>
    </citation>
    <scope>IDENTIFICATION</scope>
</reference>
<reference key="5">
    <citation type="journal article" date="2020" name="PLoS Genet.">
        <title>Dramatically diverse Schizosaccharomyces pombe wtf meiotic drivers all display high gamete-killing efficiency.</title>
        <authorList>
            <person name="Bravo Nunez M.A."/>
            <person name="Sabbarini I.M."/>
            <person name="Eickbush M.T."/>
            <person name="Liang Y."/>
            <person name="Lange J.J."/>
            <person name="Kent A.M."/>
            <person name="Zanders S.E."/>
        </authorList>
    </citation>
    <scope>DISRUPTION PHENOTYPE</scope>
</reference>
<sequence>MSGSYAPIEDSADELSVHSGNDNEIDLEKGLLPKCNTGNGGTTPCSEPPHYDSDAVVEMDMYENNIYMRTFKLRPFAKSGVTNSSNVVFQMKTYENNRHMQTFRLRPFAKNGVTNGVKLAQSLFLLLPFNFIFFACLFFRKASFTDFSLMGWILFGIWCLTCFLSSFILYAYHESWTKFARERSQEFSLILFGLLFPGIVTMVVFYALYMRSMYG</sequence>
<evidence type="ECO:0000250" key="1">
    <source>
        <dbReference type="UniProtKB" id="A0A218N034"/>
    </source>
</evidence>
<evidence type="ECO:0000250" key="2">
    <source>
        <dbReference type="UniProtKB" id="A0A482APM8"/>
    </source>
</evidence>
<evidence type="ECO:0000255" key="3"/>
<evidence type="ECO:0000256" key="4">
    <source>
        <dbReference type="SAM" id="MobiDB-lite"/>
    </source>
</evidence>
<evidence type="ECO:0000269" key="5">
    <source>
    </source>
</evidence>
<evidence type="ECO:0000305" key="6"/>
<evidence type="ECO:0000305" key="7">
    <source>
    </source>
</evidence>
<evidence type="ECO:0000312" key="8">
    <source>
        <dbReference type="PomBase" id="SPCC736.05"/>
    </source>
</evidence>
<keyword id="KW-0472">Membrane</keyword>
<keyword id="KW-1185">Reference proteome</keyword>
<keyword id="KW-0812">Transmembrane</keyword>
<keyword id="KW-1133">Transmembrane helix</keyword>
<organism>
    <name type="scientific">Schizosaccharomyces pombe (strain 972 / ATCC 24843)</name>
    <name type="common">Fission yeast</name>
    <dbReference type="NCBI Taxonomy" id="284812"/>
    <lineage>
        <taxon>Eukaryota</taxon>
        <taxon>Fungi</taxon>
        <taxon>Dikarya</taxon>
        <taxon>Ascomycota</taxon>
        <taxon>Taphrinomycotina</taxon>
        <taxon>Schizosaccharomycetes</taxon>
        <taxon>Schizosaccharomycetales</taxon>
        <taxon>Schizosaccharomycetaceae</taxon>
        <taxon>Schizosaccharomyces</taxon>
    </lineage>
</organism>
<gene>
    <name evidence="8" type="primary">wtf7</name>
    <name evidence="8" type="ORF">SPCC736.05</name>
</gene>
<proteinExistence type="inferred from homology"/>
<accession>Q7Z9I5</accession>
<protein>
    <recommendedName>
        <fullName evidence="8">Wtf element wtf7</fullName>
    </recommendedName>
</protein>